<proteinExistence type="inferred from homology"/>
<dbReference type="EMBL" id="CP000108">
    <property type="protein sequence ID" value="ABB27634.1"/>
    <property type="molecule type" value="Genomic_DNA"/>
</dbReference>
<dbReference type="SMR" id="Q3ATP1"/>
<dbReference type="STRING" id="340177.Cag_0361"/>
<dbReference type="KEGG" id="cch:Cag_0361"/>
<dbReference type="eggNOG" id="COG0231">
    <property type="taxonomic scope" value="Bacteria"/>
</dbReference>
<dbReference type="HOGENOM" id="CLU_074944_0_1_10"/>
<dbReference type="OrthoDB" id="9801844at2"/>
<dbReference type="UniPathway" id="UPA00345"/>
<dbReference type="GO" id="GO:0005737">
    <property type="term" value="C:cytoplasm"/>
    <property type="evidence" value="ECO:0007669"/>
    <property type="project" value="UniProtKB-SubCell"/>
</dbReference>
<dbReference type="GO" id="GO:0003746">
    <property type="term" value="F:translation elongation factor activity"/>
    <property type="evidence" value="ECO:0007669"/>
    <property type="project" value="UniProtKB-UniRule"/>
</dbReference>
<dbReference type="GO" id="GO:0043043">
    <property type="term" value="P:peptide biosynthetic process"/>
    <property type="evidence" value="ECO:0007669"/>
    <property type="project" value="InterPro"/>
</dbReference>
<dbReference type="CDD" id="cd04470">
    <property type="entry name" value="S1_EF-P_repeat_1"/>
    <property type="match status" value="1"/>
</dbReference>
<dbReference type="CDD" id="cd05794">
    <property type="entry name" value="S1_EF-P_repeat_2"/>
    <property type="match status" value="1"/>
</dbReference>
<dbReference type="FunFam" id="2.40.50.140:FF:000004">
    <property type="entry name" value="Elongation factor P"/>
    <property type="match status" value="1"/>
</dbReference>
<dbReference type="FunFam" id="2.40.50.140:FF:000009">
    <property type="entry name" value="Elongation factor P"/>
    <property type="match status" value="1"/>
</dbReference>
<dbReference type="Gene3D" id="2.30.30.30">
    <property type="match status" value="1"/>
</dbReference>
<dbReference type="Gene3D" id="2.40.50.140">
    <property type="entry name" value="Nucleic acid-binding proteins"/>
    <property type="match status" value="2"/>
</dbReference>
<dbReference type="HAMAP" id="MF_00141">
    <property type="entry name" value="EF_P"/>
    <property type="match status" value="1"/>
</dbReference>
<dbReference type="InterPro" id="IPR015365">
    <property type="entry name" value="Elong-fact-P_C"/>
</dbReference>
<dbReference type="InterPro" id="IPR012340">
    <property type="entry name" value="NA-bd_OB-fold"/>
</dbReference>
<dbReference type="InterPro" id="IPR014722">
    <property type="entry name" value="Rib_uL2_dom2"/>
</dbReference>
<dbReference type="InterPro" id="IPR020599">
    <property type="entry name" value="Transl_elong_fac_P/YeiP"/>
</dbReference>
<dbReference type="InterPro" id="IPR013185">
    <property type="entry name" value="Transl_elong_KOW-like"/>
</dbReference>
<dbReference type="InterPro" id="IPR001059">
    <property type="entry name" value="Transl_elong_P/YeiP_cen"/>
</dbReference>
<dbReference type="InterPro" id="IPR013852">
    <property type="entry name" value="Transl_elong_P/YeiP_CS"/>
</dbReference>
<dbReference type="InterPro" id="IPR011768">
    <property type="entry name" value="Transl_elongation_fac_P"/>
</dbReference>
<dbReference type="InterPro" id="IPR008991">
    <property type="entry name" value="Translation_prot_SH3-like_sf"/>
</dbReference>
<dbReference type="NCBIfam" id="TIGR00038">
    <property type="entry name" value="efp"/>
    <property type="match status" value="1"/>
</dbReference>
<dbReference type="NCBIfam" id="NF001810">
    <property type="entry name" value="PRK00529.1"/>
    <property type="match status" value="1"/>
</dbReference>
<dbReference type="PANTHER" id="PTHR30053">
    <property type="entry name" value="ELONGATION FACTOR P"/>
    <property type="match status" value="1"/>
</dbReference>
<dbReference type="PANTHER" id="PTHR30053:SF12">
    <property type="entry name" value="ELONGATION FACTOR P (EF-P) FAMILY PROTEIN"/>
    <property type="match status" value="1"/>
</dbReference>
<dbReference type="Pfam" id="PF01132">
    <property type="entry name" value="EFP"/>
    <property type="match status" value="1"/>
</dbReference>
<dbReference type="Pfam" id="PF08207">
    <property type="entry name" value="EFP_N"/>
    <property type="match status" value="1"/>
</dbReference>
<dbReference type="Pfam" id="PF09285">
    <property type="entry name" value="Elong-fact-P_C"/>
    <property type="match status" value="1"/>
</dbReference>
<dbReference type="PIRSF" id="PIRSF005901">
    <property type="entry name" value="EF-P"/>
    <property type="match status" value="1"/>
</dbReference>
<dbReference type="SMART" id="SM01185">
    <property type="entry name" value="EFP"/>
    <property type="match status" value="1"/>
</dbReference>
<dbReference type="SMART" id="SM00841">
    <property type="entry name" value="Elong-fact-P_C"/>
    <property type="match status" value="1"/>
</dbReference>
<dbReference type="SUPFAM" id="SSF50249">
    <property type="entry name" value="Nucleic acid-binding proteins"/>
    <property type="match status" value="2"/>
</dbReference>
<dbReference type="SUPFAM" id="SSF50104">
    <property type="entry name" value="Translation proteins SH3-like domain"/>
    <property type="match status" value="1"/>
</dbReference>
<dbReference type="PROSITE" id="PS01275">
    <property type="entry name" value="EFP"/>
    <property type="match status" value="1"/>
</dbReference>
<gene>
    <name evidence="1" type="primary">efp</name>
    <name type="ordered locus">Cag_0361</name>
</gene>
<protein>
    <recommendedName>
        <fullName evidence="1">Elongation factor P</fullName>
        <shortName evidence="1">EF-P</shortName>
    </recommendedName>
</protein>
<keyword id="KW-0963">Cytoplasm</keyword>
<keyword id="KW-0251">Elongation factor</keyword>
<keyword id="KW-0648">Protein biosynthesis</keyword>
<organism>
    <name type="scientific">Chlorobium chlorochromatii (strain CaD3)</name>
    <dbReference type="NCBI Taxonomy" id="340177"/>
    <lineage>
        <taxon>Bacteria</taxon>
        <taxon>Pseudomonadati</taxon>
        <taxon>Chlorobiota</taxon>
        <taxon>Chlorobiia</taxon>
        <taxon>Chlorobiales</taxon>
        <taxon>Chlorobiaceae</taxon>
        <taxon>Chlorobium/Pelodictyon group</taxon>
        <taxon>Chlorobium</taxon>
    </lineage>
</organism>
<evidence type="ECO:0000255" key="1">
    <source>
        <dbReference type="HAMAP-Rule" id="MF_00141"/>
    </source>
</evidence>
<name>EFP_CHLCH</name>
<reference key="1">
    <citation type="submission" date="2005-08" db="EMBL/GenBank/DDBJ databases">
        <title>Complete sequence of Chlorobium chlorochromatii CaD3.</title>
        <authorList>
            <consortium name="US DOE Joint Genome Institute"/>
            <person name="Copeland A."/>
            <person name="Lucas S."/>
            <person name="Lapidus A."/>
            <person name="Barry K."/>
            <person name="Detter J.C."/>
            <person name="Glavina T."/>
            <person name="Hammon N."/>
            <person name="Israni S."/>
            <person name="Pitluck S."/>
            <person name="Bryant D."/>
            <person name="Schmutz J."/>
            <person name="Larimer F."/>
            <person name="Land M."/>
            <person name="Kyrpides N."/>
            <person name="Ivanova N."/>
            <person name="Richardson P."/>
        </authorList>
    </citation>
    <scope>NUCLEOTIDE SEQUENCE [LARGE SCALE GENOMIC DNA]</scope>
    <source>
        <strain>CaD3</strain>
    </source>
</reference>
<sequence>MPSISTVSKGSIIRFKGEPHSIESLIHRTPGNLRAFYQANMKNLKTGRNVEYRFSSSETVDVIVTERKQYQYLYRDGSDFVMMDNNTFEQINVPEVALGEGANFMKDNINVTIVFSDDGSILQVELPTFVEVEVTDTNPASKDDRATSGTKPAIVETGAEVNVPMFIQIGSVIRVDTRTGEYIERVKK</sequence>
<comment type="function">
    <text evidence="1">Involved in peptide bond synthesis. Stimulates efficient translation and peptide-bond synthesis on native or reconstituted 70S ribosomes in vitro. Probably functions indirectly by altering the affinity of the ribosome for aminoacyl-tRNA, thus increasing their reactivity as acceptors for peptidyl transferase.</text>
</comment>
<comment type="pathway">
    <text evidence="1">Protein biosynthesis; polypeptide chain elongation.</text>
</comment>
<comment type="subcellular location">
    <subcellularLocation>
        <location evidence="1">Cytoplasm</location>
    </subcellularLocation>
</comment>
<comment type="similarity">
    <text evidence="1">Belongs to the elongation factor P family.</text>
</comment>
<accession>Q3ATP1</accession>
<feature type="chain" id="PRO_1000010712" description="Elongation factor P">
    <location>
        <begin position="1"/>
        <end position="188"/>
    </location>
</feature>